<sequence>MRLWSWVLRLGLLSAALGCGLAERPRRVRRDPRAVRPPRPAAGPATCATRAARGRRASPPPPPGGAWEAVRVPRRRQQRAARGAEEPSPPSRALYFSGRGEQLRLRADLELPRDAFTLQVWLRAEGGQKSPAVITGLYDKCSYTSRDRGWVMGIHTTSDQGNRDPRYFFSLKTDRARKVTTIDAHRSYLPGQWVHLAATYDGRLMKLYMNGAQVATSAEQVGGIFSPLTQKCKVLMLGGSALNHNFRGHIEHFSLWKVARTQREIVSDMETRGLHTPLPQLLLQENWDNVKRTWSPMKDGNSPQVEFSNAHGFLLDTNLEPPLCGQTLCDNTEVISSYNQLPSFRQPKVVRYRVVNIYDDHHENPTVSWQQIDFQHQQLAEAFQHYNISWELEVLNINSSSLRHRLILANCDISKIGDEKCDPECNHTLTGHDGGDCRQLRYPAFMKKQQNGVCDMDCNYERFNFDGGECCDPDITDVTKTCFDPDSPHRAYLDVNELKNILRLDGSTHLNIFFANSSEEELAGVATWPWDKEALMHLGGIVLNPSFYGIPGHTHTMIHEIGHSLGLYHIFRGISEIQSCSDPCMETEPSFETGDLCNDTNPAPKHKFCGDPGPGNDTCGFHGFFNTPYNNFMSYADDDCTDSFTPNQVSRMHCYLDLVYQSWQPSRKPAPVALAPQVVGHTMDSVMLEWFPPIDGHFFERELGSACDLCLEGRILVQYAFNASSPMPCGPSGHWSPREAEGHPDVEQPCKSSVRTWSPNSAVNPHTVPPACPEPQGCYLELEFRYPLVPESLTIWVTFVSSDWDSSGAVNDIKLLTISGKNISLGPQNVFCDIPLTIRLRDVGEEVYGIQIYTLDEHLEIDAAMLTSTVDSPLCLQCKPLQYKVLRDPPLLEDVASLLHLNRRFMDTDLKLGSVYQYRIITISGNEESEPSPAAIYTHGSGYCGDGVIQKDQGEECDDMNKVNGDGCSLFCKQEVSFNCIDEPSRCYFHDGDGMCEEFEQKTSIKDCGVYTPQGFLDQWASNASVSHQDQQCPGWVVIGQPAASQVCRTKVIDLSEGISQHAWYPCTITYPYYHLPQTTFWLQTYFSQPMVAAAVIIHLVTDGTYYGDQKQETISVQLLDTKDQSHDLGLHVLSCRNNPLIIPVVHDLSQPFYHSQAVHVSFSSPLVAISGVALRSFDNFDPVTLSSCQRGETYSPAEQSCVHFACQAADCPELAVGNASLNCSSNHHYHGAQCTVSCQTGYVLQIQRDDELIKSQVGPSITVTCTEGKWNKQVACEPVDCGIPDHHHVYAASFSCPEGTTFGRRCSFQCRHPAQLKGNNSFLTCMEDGLWSFPEALCELMCLAPPPVPNADLQTARCRENKHKVGSFCKYKCKPGYHVPGSSRKSKKRAFKTQCTQDGSWQEGTCVPVTCDPPPPKFHGLYQCTNGFQFNSECRIKCEDSDASQGRGSNIIHCRKDGTWSGSFHVCREMQGQCSAPNQLNSNLKLQCPDGYAIGSECAISCLDHNSESIILPVNLTVRDIPHWMNPTRVQRIVCTAGLQWYPHPALIHCVKGCEPFMGDNYCDAINNRAFCNYDGGDCCTSTVKTKKVTPFPMSCDLQNDCACRDPEAQEHNRKDLRGYSHG</sequence>
<reference key="1">
    <citation type="journal article" date="2009" name="PLoS Biol.">
        <title>Lineage-specific biology revealed by a finished genome assembly of the mouse.</title>
        <authorList>
            <person name="Church D.M."/>
            <person name="Goodstadt L."/>
            <person name="Hillier L.W."/>
            <person name="Zody M.C."/>
            <person name="Goldstein S."/>
            <person name="She X."/>
            <person name="Bult C.J."/>
            <person name="Agarwala R."/>
            <person name="Cherry J.L."/>
            <person name="DiCuccio M."/>
            <person name="Hlavina W."/>
            <person name="Kapustin Y."/>
            <person name="Meric P."/>
            <person name="Maglott D."/>
            <person name="Birtle Z."/>
            <person name="Marques A.C."/>
            <person name="Graves T."/>
            <person name="Zhou S."/>
            <person name="Teague B."/>
            <person name="Potamousis K."/>
            <person name="Churas C."/>
            <person name="Place M."/>
            <person name="Herschleb J."/>
            <person name="Runnheim R."/>
            <person name="Forrest D."/>
            <person name="Amos-Landgraf J."/>
            <person name="Schwartz D.C."/>
            <person name="Cheng Z."/>
            <person name="Lindblad-Toh K."/>
            <person name="Eichler E.E."/>
            <person name="Ponting C.P."/>
        </authorList>
    </citation>
    <scope>NUCLEOTIDE SEQUENCE [LARGE SCALE GENOMIC DNA]</scope>
    <source>
        <strain>C57BL/6J</strain>
    </source>
</reference>
<reference key="2">
    <citation type="journal article" date="2002" name="Eur. J. Biochem.">
        <title>Expression of recombinant murine pregnancy-associated plasma protein-A (PAPP-A) and a novel variant (PAPP-Ai) with differential proteolytic activity.</title>
        <authorList>
            <person name="Soe R."/>
            <person name="Overgaard M.T."/>
            <person name="Thomsen A.R."/>
            <person name="Laursen L.S."/>
            <person name="Olsen I.M."/>
            <person name="Sottrup-Jensen L."/>
            <person name="Haaning J."/>
            <person name="Giudice L.C."/>
            <person name="Conover C.A."/>
            <person name="Oxvig C."/>
        </authorList>
    </citation>
    <scope>NUCLEOTIDE SEQUENCE [MRNA] OF 80-1624 (ISOFORMS 1 AND 2)</scope>
    <scope>FUNCTION</scope>
    <scope>TISSUE SPECIFICITY</scope>
</reference>
<reference key="3">
    <citation type="journal article" date="2002" name="Growth Horm. IGF Res.">
        <title>Differential regulation of pregnancy associated plasma protein (PAPP)-A during pregnancy in human and mouse.</title>
        <authorList>
            <person name="Qin X."/>
            <person name="Sexton C."/>
            <person name="Byun D."/>
            <person name="Strong D.D."/>
            <person name="Baylink D.J."/>
            <person name="Mohan S."/>
        </authorList>
    </citation>
    <scope>NUCLEOTIDE SEQUENCE [GENOMIC DNA] OF 136-489 (ISOFORM 1)</scope>
    <source>
        <strain>129/SvJ</strain>
    </source>
</reference>
<reference key="4">
    <citation type="journal article" date="2002" name="Endocrinology">
        <title>The regulated expression of the pregnancy-associated plasma protein-A in the rodent ovary: a proposed role in the development of dominant follicles and of corpora lutea.</title>
        <authorList>
            <person name="Hourvitz A."/>
            <person name="Kuwahara A."/>
            <person name="Hennebold J.D."/>
            <person name="Tavares A.B."/>
            <person name="Negishi H."/>
            <person name="Lee T.H."/>
            <person name="Erickson G.F."/>
            <person name="Adashi E.Y."/>
        </authorList>
    </citation>
    <scope>NUCLEOTIDE SEQUENCE [MRNA] OF 258-1624 (ISOFORM 1)</scope>
    <scope>TISSUE SPECIFICITY</scope>
    <source>
        <strain>C57BL/6J</strain>
    </source>
</reference>
<reference key="5">
    <citation type="submission" date="2000-04" db="EMBL/GenBank/DDBJ databases">
        <title>Partial sequence of Mus musculus Mus musculus pregnancy-associated plasma protein A (Pappa).</title>
        <authorList>
            <person name="Olesen C."/>
            <person name="Hansen C."/>
            <person name="Hayashizaki Y."/>
            <person name="Byskov A."/>
            <person name="Tommerup N."/>
        </authorList>
    </citation>
    <scope>NUCLEOTIDE SEQUENCE [MRNA] OF 1157-1624 (ISOFORM 1)</scope>
    <source>
        <strain>C57BL/6J</strain>
        <tissue>Embryo</tissue>
    </source>
</reference>
<organism>
    <name type="scientific">Mus musculus</name>
    <name type="common">Mouse</name>
    <dbReference type="NCBI Taxonomy" id="10090"/>
    <lineage>
        <taxon>Eukaryota</taxon>
        <taxon>Metazoa</taxon>
        <taxon>Chordata</taxon>
        <taxon>Craniata</taxon>
        <taxon>Vertebrata</taxon>
        <taxon>Euteleostomi</taxon>
        <taxon>Mammalia</taxon>
        <taxon>Eutheria</taxon>
        <taxon>Euarchontoglires</taxon>
        <taxon>Glires</taxon>
        <taxon>Rodentia</taxon>
        <taxon>Myomorpha</taxon>
        <taxon>Muroidea</taxon>
        <taxon>Muridae</taxon>
        <taxon>Murinae</taxon>
        <taxon>Mus</taxon>
        <taxon>Mus</taxon>
    </lineage>
</organism>
<keyword id="KW-0025">Alternative splicing</keyword>
<keyword id="KW-1015">Disulfide bond</keyword>
<keyword id="KW-0325">Glycoprotein</keyword>
<keyword id="KW-0378">Hydrolase</keyword>
<keyword id="KW-0479">Metal-binding</keyword>
<keyword id="KW-0482">Metalloprotease</keyword>
<keyword id="KW-0645">Protease</keyword>
<keyword id="KW-1185">Reference proteome</keyword>
<keyword id="KW-0677">Repeat</keyword>
<keyword id="KW-0964">Secreted</keyword>
<keyword id="KW-0732">Signal</keyword>
<keyword id="KW-0768">Sushi</keyword>
<keyword id="KW-0862">Zinc</keyword>
<keyword id="KW-0865">Zymogen</keyword>
<dbReference type="EC" id="3.4.24.79"/>
<dbReference type="EMBL" id="AL691454">
    <property type="status" value="NOT_ANNOTATED_CDS"/>
    <property type="molecule type" value="Genomic_DNA"/>
</dbReference>
<dbReference type="EMBL" id="AL691491">
    <property type="status" value="NOT_ANNOTATED_CDS"/>
    <property type="molecule type" value="Genomic_DNA"/>
</dbReference>
<dbReference type="EMBL" id="AF439513">
    <property type="protein sequence ID" value="AAM12687.1"/>
    <property type="molecule type" value="mRNA"/>
</dbReference>
<dbReference type="EMBL" id="AF439514">
    <property type="protein sequence ID" value="AAM12688.1"/>
    <property type="molecule type" value="mRNA"/>
</dbReference>
<dbReference type="EMBL" id="AF510317">
    <property type="protein sequence ID" value="AAM44048.1"/>
    <property type="molecule type" value="Genomic_DNA"/>
</dbReference>
<dbReference type="EMBL" id="AF258461">
    <property type="protein sequence ID" value="AAG09799.1"/>
    <property type="molecule type" value="mRNA"/>
</dbReference>
<dbReference type="EMBL" id="AF260433">
    <property type="protein sequence ID" value="AAF70319.1"/>
    <property type="molecule type" value="mRNA"/>
</dbReference>
<dbReference type="CCDS" id="CCDS18267.1">
    <molecule id="Q8R4K8-1"/>
</dbReference>
<dbReference type="RefSeq" id="NP_067337.1">
    <molecule id="Q8R4K8-1"/>
    <property type="nucleotide sequence ID" value="NM_021362.2"/>
</dbReference>
<dbReference type="SMR" id="Q8R4K8"/>
<dbReference type="BioGRID" id="202026">
    <property type="interactions" value="4"/>
</dbReference>
<dbReference type="FunCoup" id="Q8R4K8">
    <property type="interactions" value="570"/>
</dbReference>
<dbReference type="STRING" id="10090.ENSMUSP00000081545"/>
<dbReference type="MEROPS" id="M43.004"/>
<dbReference type="GlyCosmos" id="Q8R4K8">
    <property type="glycosylation" value="13 sites, No reported glycans"/>
</dbReference>
<dbReference type="GlyGen" id="Q8R4K8">
    <property type="glycosylation" value="13 sites"/>
</dbReference>
<dbReference type="iPTMnet" id="Q8R4K8"/>
<dbReference type="PhosphoSitePlus" id="Q8R4K8"/>
<dbReference type="CPTAC" id="non-CPTAC-3337"/>
<dbReference type="PaxDb" id="10090-ENSMUSP00000081545"/>
<dbReference type="PeptideAtlas" id="Q8R4K8"/>
<dbReference type="ProteomicsDB" id="294006">
    <molecule id="Q8R4K8-1"/>
</dbReference>
<dbReference type="ProteomicsDB" id="294007">
    <molecule id="Q8R4K8-2"/>
</dbReference>
<dbReference type="Pumba" id="Q8R4K8"/>
<dbReference type="Antibodypedia" id="3385">
    <property type="antibodies" value="908 antibodies from 33 providers"/>
</dbReference>
<dbReference type="DNASU" id="18491"/>
<dbReference type="Ensembl" id="ENSMUST00000084501.4">
    <molecule id="Q8R4K8-1"/>
    <property type="protein sequence ID" value="ENSMUSP00000081545.4"/>
    <property type="gene ID" value="ENSMUSG00000028370.8"/>
</dbReference>
<dbReference type="GeneID" id="18491"/>
<dbReference type="KEGG" id="mmu:18491"/>
<dbReference type="UCSC" id="uc008thm.1">
    <molecule id="Q8R4K8-1"/>
    <property type="organism name" value="mouse"/>
</dbReference>
<dbReference type="UCSC" id="uc012dgb.1">
    <molecule id="Q8R4K8-2"/>
    <property type="organism name" value="mouse"/>
</dbReference>
<dbReference type="AGR" id="MGI:97479"/>
<dbReference type="CTD" id="5069"/>
<dbReference type="MGI" id="MGI:97479">
    <property type="gene designation" value="Pappa"/>
</dbReference>
<dbReference type="VEuPathDB" id="HostDB:ENSMUSG00000028370"/>
<dbReference type="eggNOG" id="ENOG502QQ7Z">
    <property type="taxonomic scope" value="Eukaryota"/>
</dbReference>
<dbReference type="GeneTree" id="ENSGT00940000156654"/>
<dbReference type="HOGENOM" id="CLU_002636_2_0_1"/>
<dbReference type="InParanoid" id="Q8R4K8"/>
<dbReference type="OMA" id="KQVVCEP"/>
<dbReference type="OrthoDB" id="536211at2759"/>
<dbReference type="PhylomeDB" id="Q8R4K8"/>
<dbReference type="TreeFam" id="TF331636"/>
<dbReference type="BRENDA" id="3.4.24.79">
    <property type="organism ID" value="3474"/>
</dbReference>
<dbReference type="Reactome" id="R-MMU-381426">
    <property type="pathway name" value="Regulation of Insulin-like Growth Factor (IGF) transport and uptake by Insulin-like Growth Factor Binding Proteins (IGFBPs)"/>
</dbReference>
<dbReference type="BioGRID-ORCS" id="18491">
    <property type="hits" value="2 hits in 78 CRISPR screens"/>
</dbReference>
<dbReference type="ChiTaRS" id="Pappa">
    <property type="organism name" value="mouse"/>
</dbReference>
<dbReference type="PRO" id="PR:Q8R4K8"/>
<dbReference type="Proteomes" id="UP000000589">
    <property type="component" value="Chromosome 4"/>
</dbReference>
<dbReference type="RNAct" id="Q8R4K8">
    <property type="molecule type" value="protein"/>
</dbReference>
<dbReference type="Bgee" id="ENSMUSG00000028370">
    <property type="expression patterns" value="Expressed in stroma of bone marrow and 148 other cell types or tissues"/>
</dbReference>
<dbReference type="GO" id="GO:0005615">
    <property type="term" value="C:extracellular space"/>
    <property type="evidence" value="ECO:0007005"/>
    <property type="project" value="BHF-UCL"/>
</dbReference>
<dbReference type="GO" id="GO:0004175">
    <property type="term" value="F:endopeptidase activity"/>
    <property type="evidence" value="ECO:0000314"/>
    <property type="project" value="MGI"/>
</dbReference>
<dbReference type="GO" id="GO:0046872">
    <property type="term" value="F:metal ion binding"/>
    <property type="evidence" value="ECO:0007669"/>
    <property type="project" value="UniProtKB-KW"/>
</dbReference>
<dbReference type="GO" id="GO:0008237">
    <property type="term" value="F:metallopeptidase activity"/>
    <property type="evidence" value="ECO:0007669"/>
    <property type="project" value="UniProtKB-KW"/>
</dbReference>
<dbReference type="GO" id="GO:0006508">
    <property type="term" value="P:proteolysis"/>
    <property type="evidence" value="ECO:0007669"/>
    <property type="project" value="UniProtKB-KW"/>
</dbReference>
<dbReference type="CDD" id="cd00033">
    <property type="entry name" value="CCP"/>
    <property type="match status" value="4"/>
</dbReference>
<dbReference type="CDD" id="cd04275">
    <property type="entry name" value="ZnMc_pappalysin_like"/>
    <property type="match status" value="1"/>
</dbReference>
<dbReference type="FunFam" id="2.10.70.10:FF:000045">
    <property type="entry name" value="Pappalysin 1"/>
    <property type="match status" value="1"/>
</dbReference>
<dbReference type="FunFam" id="2.10.70.10:FF:000057">
    <property type="entry name" value="Pappalysin 1"/>
    <property type="match status" value="1"/>
</dbReference>
<dbReference type="FunFam" id="2.10.70.10:FF:000061">
    <property type="entry name" value="Pappalysin 1"/>
    <property type="match status" value="1"/>
</dbReference>
<dbReference type="FunFam" id="2.10.70.10:FF:000068">
    <property type="entry name" value="Pappalysin 1"/>
    <property type="match status" value="1"/>
</dbReference>
<dbReference type="FunFam" id="2.60.120.200:FF:000097">
    <property type="entry name" value="Pappalysin 1"/>
    <property type="match status" value="1"/>
</dbReference>
<dbReference type="FunFam" id="3.40.390.10:FF:000026">
    <property type="entry name" value="Pappalysin 1"/>
    <property type="match status" value="1"/>
</dbReference>
<dbReference type="Gene3D" id="2.60.120.200">
    <property type="match status" value="1"/>
</dbReference>
<dbReference type="Gene3D" id="3.40.390.10">
    <property type="entry name" value="Collagenase (Catalytic Domain)"/>
    <property type="match status" value="1"/>
</dbReference>
<dbReference type="Gene3D" id="2.10.70.10">
    <property type="entry name" value="Complement Module, domain 1"/>
    <property type="match status" value="4"/>
</dbReference>
<dbReference type="InterPro" id="IPR013320">
    <property type="entry name" value="ConA-like_dom_sf"/>
</dbReference>
<dbReference type="InterPro" id="IPR006558">
    <property type="entry name" value="LamG-like"/>
</dbReference>
<dbReference type="InterPro" id="IPR024079">
    <property type="entry name" value="MetalloPept_cat_dom_sf"/>
</dbReference>
<dbReference type="InterPro" id="IPR011936">
    <property type="entry name" value="Myxo_disulph_rpt"/>
</dbReference>
<dbReference type="InterPro" id="IPR000800">
    <property type="entry name" value="Notch_dom"/>
</dbReference>
<dbReference type="InterPro" id="IPR043543">
    <property type="entry name" value="PAPPA/PAPPA2"/>
</dbReference>
<dbReference type="InterPro" id="IPR008754">
    <property type="entry name" value="Peptidase_M43"/>
</dbReference>
<dbReference type="InterPro" id="IPR035976">
    <property type="entry name" value="Sushi/SCR/CCP_sf"/>
</dbReference>
<dbReference type="InterPro" id="IPR000436">
    <property type="entry name" value="Sushi_SCR_CCP_dom"/>
</dbReference>
<dbReference type="NCBIfam" id="TIGR02232">
    <property type="entry name" value="myxo_disulf_rpt"/>
    <property type="match status" value="1"/>
</dbReference>
<dbReference type="PANTHER" id="PTHR46130">
    <property type="entry name" value="LAMGL DOMAIN-CONTAINING PROTEIN"/>
    <property type="match status" value="1"/>
</dbReference>
<dbReference type="PANTHER" id="PTHR46130:SF2">
    <property type="entry name" value="PAPPALYSIN-1"/>
    <property type="match status" value="1"/>
</dbReference>
<dbReference type="Pfam" id="PF13385">
    <property type="entry name" value="Laminin_G_3"/>
    <property type="match status" value="1"/>
</dbReference>
<dbReference type="Pfam" id="PF05572">
    <property type="entry name" value="Peptidase_M43"/>
    <property type="match status" value="1"/>
</dbReference>
<dbReference type="Pfam" id="PF00084">
    <property type="entry name" value="Sushi"/>
    <property type="match status" value="2"/>
</dbReference>
<dbReference type="SMART" id="SM00032">
    <property type="entry name" value="CCP"/>
    <property type="match status" value="4"/>
</dbReference>
<dbReference type="SMART" id="SM00560">
    <property type="entry name" value="LamGL"/>
    <property type="match status" value="1"/>
</dbReference>
<dbReference type="SMART" id="SM00004">
    <property type="entry name" value="NL"/>
    <property type="match status" value="3"/>
</dbReference>
<dbReference type="SUPFAM" id="SSF57535">
    <property type="entry name" value="Complement control module/SCR domain"/>
    <property type="match status" value="4"/>
</dbReference>
<dbReference type="SUPFAM" id="SSF49899">
    <property type="entry name" value="Concanavalin A-like lectins/glucanases"/>
    <property type="match status" value="1"/>
</dbReference>
<dbReference type="SUPFAM" id="SSF55486">
    <property type="entry name" value="Metalloproteases ('zincins'), catalytic domain"/>
    <property type="match status" value="2"/>
</dbReference>
<dbReference type="PROSITE" id="PS50923">
    <property type="entry name" value="SUSHI"/>
    <property type="match status" value="5"/>
</dbReference>
<dbReference type="PROSITE" id="PS00142">
    <property type="entry name" value="ZINC_PROTEASE"/>
    <property type="match status" value="1"/>
</dbReference>
<protein>
    <recommendedName>
        <fullName>Pappalysin-1</fullName>
        <ecNumber>3.4.24.79</ecNumber>
    </recommendedName>
    <alternativeName>
        <fullName>Insulin-like growth factor-dependent IGF-binding protein 4 protease</fullName>
        <shortName>IGF-dependent IGFBP-4 protease</shortName>
        <shortName>IGFBP-4ase</shortName>
    </alternativeName>
    <alternativeName>
        <fullName>Pregnancy-associated plasma protein A</fullName>
        <shortName>PAPP-A</shortName>
    </alternativeName>
</protein>
<evidence type="ECO:0000250" key="1"/>
<evidence type="ECO:0000255" key="2"/>
<evidence type="ECO:0000255" key="3">
    <source>
        <dbReference type="PROSITE-ProRule" id="PRU00302"/>
    </source>
</evidence>
<evidence type="ECO:0000255" key="4">
    <source>
        <dbReference type="PROSITE-ProRule" id="PRU10095"/>
    </source>
</evidence>
<evidence type="ECO:0000256" key="5">
    <source>
        <dbReference type="SAM" id="MobiDB-lite"/>
    </source>
</evidence>
<evidence type="ECO:0000269" key="6">
    <source>
    </source>
</evidence>
<evidence type="ECO:0000269" key="7">
    <source>
    </source>
</evidence>
<evidence type="ECO:0000303" key="8">
    <source>
    </source>
</evidence>
<evidence type="ECO:0000305" key="9"/>
<proteinExistence type="evidence at transcript level"/>
<feature type="signal peptide" evidence="2">
    <location>
        <begin position="1"/>
        <end position="22"/>
    </location>
</feature>
<feature type="propeptide" id="PRO_0000029247" evidence="1">
    <location>
        <begin position="23"/>
        <end position="81"/>
    </location>
</feature>
<feature type="chain" id="PRO_0000029248" description="Pappalysin-1">
    <location>
        <begin position="82"/>
        <end position="1624"/>
    </location>
</feature>
<feature type="domain" description="Sushi 1" evidence="3">
    <location>
        <begin position="1210"/>
        <end position="1279"/>
    </location>
</feature>
<feature type="domain" description="Sushi 2" evidence="3">
    <location>
        <begin position="1280"/>
        <end position="1341"/>
    </location>
</feature>
<feature type="domain" description="Sushi 3" evidence="3">
    <location>
        <begin position="1342"/>
        <end position="1409"/>
    </location>
</feature>
<feature type="domain" description="Sushi 4" evidence="3">
    <location>
        <begin position="1410"/>
        <end position="1470"/>
    </location>
</feature>
<feature type="domain" description="Sushi 5" evidence="3">
    <location>
        <begin position="1473"/>
        <end position="1553"/>
    </location>
</feature>
<feature type="region of interest" description="Disordered" evidence="5">
    <location>
        <begin position="28"/>
        <end position="93"/>
    </location>
</feature>
<feature type="region of interest" description="Metalloprotease">
    <location>
        <begin position="272"/>
        <end position="583"/>
    </location>
</feature>
<feature type="compositionally biased region" description="Low complexity" evidence="5">
    <location>
        <begin position="42"/>
        <end position="51"/>
    </location>
</feature>
<feature type="active site" evidence="4">
    <location>
        <position position="560"/>
    </location>
</feature>
<feature type="binding site" evidence="4">
    <location>
        <position position="559"/>
    </location>
    <ligand>
        <name>Zn(2+)</name>
        <dbReference type="ChEBI" id="CHEBI:29105"/>
        <note>catalytic</note>
    </ligand>
</feature>
<feature type="binding site" evidence="4">
    <location>
        <position position="563"/>
    </location>
    <ligand>
        <name>Zn(2+)</name>
        <dbReference type="ChEBI" id="CHEBI:29105"/>
        <note>catalytic</note>
    </ligand>
</feature>
<feature type="binding site" evidence="4">
    <location>
        <position position="569"/>
    </location>
    <ligand>
        <name>Zn(2+)</name>
        <dbReference type="ChEBI" id="CHEBI:29105"/>
        <note>catalytic</note>
    </ligand>
</feature>
<feature type="glycosylation site" description="N-linked (GlcNAc...) asparagine" evidence="2">
    <location>
        <position position="387"/>
    </location>
</feature>
<feature type="glycosylation site" description="N-linked (GlcNAc...) asparagine" evidence="2">
    <location>
        <position position="398"/>
    </location>
</feature>
<feature type="glycosylation site" description="N-linked (GlcNAc...) asparagine" evidence="2">
    <location>
        <position position="426"/>
    </location>
</feature>
<feature type="glycosylation site" description="N-linked (GlcNAc...) asparagine" evidence="2">
    <location>
        <position position="516"/>
    </location>
</feature>
<feature type="glycosylation site" description="N-linked (GlcNAc...) asparagine" evidence="2">
    <location>
        <position position="598"/>
    </location>
</feature>
<feature type="glycosylation site" description="N-linked (GlcNAc...) asparagine" evidence="2">
    <location>
        <position position="616"/>
    </location>
</feature>
<feature type="glycosylation site" description="N-linked (GlcNAc...) asparagine" evidence="2">
    <location>
        <position position="722"/>
    </location>
</feature>
<feature type="glycosylation site" description="N-linked (GlcNAc...) asparagine" evidence="2">
    <location>
        <position position="822"/>
    </location>
</feature>
<feature type="glycosylation site" description="N-linked (GlcNAc...) asparagine" evidence="2">
    <location>
        <position position="1023"/>
    </location>
</feature>
<feature type="glycosylation site" description="N-linked (GlcNAc...) asparagine" evidence="2">
    <location>
        <position position="1219"/>
    </location>
</feature>
<feature type="glycosylation site" description="N-linked (GlcNAc...) asparagine" evidence="2">
    <location>
        <position position="1223"/>
    </location>
</feature>
<feature type="glycosylation site" description="N-linked (GlcNAc...) asparagine" evidence="2">
    <location>
        <position position="1320"/>
    </location>
</feature>
<feature type="glycosylation site" description="N-linked (GlcNAc...) asparagine" evidence="2">
    <location>
        <position position="1516"/>
    </location>
</feature>
<feature type="disulfide bond" evidence="3">
    <location>
        <begin position="141"/>
        <end position="232"/>
    </location>
</feature>
<feature type="disulfide bond" evidence="3">
    <location>
        <begin position="324"/>
        <end position="619"/>
    </location>
</feature>
<feature type="disulfide bond" evidence="3">
    <location>
        <begin position="329"/>
        <end position="654"/>
    </location>
</feature>
<feature type="disulfide bond" evidence="3">
    <location>
        <begin position="411"/>
        <end position="425"/>
    </location>
</feature>
<feature type="disulfide bond" evidence="3">
    <location>
        <begin position="421"/>
        <end position="437"/>
    </location>
</feature>
<feature type="disulfide bond" evidence="3">
    <location>
        <begin position="454"/>
        <end position="470"/>
    </location>
</feature>
<feature type="disulfide bond" description="Interchain (with C-49 in PRG2 proform)" evidence="3">
    <location>
        <position position="458"/>
    </location>
</feature>
<feature type="disulfide bond" evidence="3">
    <location>
        <begin position="471"/>
        <end position="482"/>
    </location>
</feature>
<feature type="disulfide bond" description="Or C-580 with C-609" evidence="3">
    <location>
        <begin position="580"/>
        <end position="597"/>
    </location>
</feature>
<feature type="disulfide bond" description="Or C-584 with C-597" evidence="3">
    <location>
        <begin position="584"/>
        <end position="609"/>
    </location>
</feature>
<feature type="disulfide bond" evidence="3">
    <location>
        <begin position="707"/>
        <end position="875"/>
    </location>
</feature>
<feature type="disulfide bond" evidence="3">
    <location>
        <begin position="710"/>
        <end position="878"/>
    </location>
</feature>
<feature type="disulfide bond" description="Interchain (with C-170 in PRG2 proform)" evidence="3">
    <location>
        <position position="729"/>
    </location>
</feature>
<feature type="disulfide bond" evidence="3">
    <location>
        <begin position="750"/>
        <end position="832"/>
    </location>
</feature>
<feature type="disulfide bond" evidence="3">
    <location>
        <begin position="772"/>
        <end position="778"/>
    </location>
</feature>
<feature type="disulfide bond" evidence="3">
    <location>
        <begin position="944"/>
        <end position="972"/>
    </location>
</feature>
<feature type="disulfide bond" evidence="3">
    <location>
        <begin position="957"/>
        <end position="968"/>
    </location>
</feature>
<feature type="disulfide bond" evidence="3">
    <location>
        <begin position="980"/>
        <end position="987"/>
    </location>
</feature>
<feature type="disulfide bond" evidence="3">
    <location>
        <begin position="996"/>
        <end position="1008"/>
    </location>
</feature>
<feature type="disulfide bond" evidence="3">
    <location>
        <begin position="1033"/>
        <end position="1067"/>
    </location>
</feature>
<feature type="disulfide bond" evidence="3">
    <location>
        <begin position="1048"/>
        <end position="1136"/>
    </location>
</feature>
<feature type="disulfide bond" evidence="3">
    <location>
        <begin position="1189"/>
        <end position="1202"/>
    </location>
</feature>
<feature type="disulfide bond" description="Interchain" evidence="3">
    <location>
        <position position="1207"/>
    </location>
</feature>
<feature type="disulfide bond" evidence="3">
    <location>
        <begin position="1212"/>
        <end position="1266"/>
    </location>
</feature>
<feature type="disulfide bond" evidence="3">
    <location>
        <begin position="1224"/>
        <end position="1235"/>
    </location>
</feature>
<feature type="disulfide bond" evidence="3">
    <location>
        <begin position="1239"/>
        <end position="1277"/>
    </location>
</feature>
<feature type="disulfide bond" evidence="3">
    <location>
        <begin position="1282"/>
        <end position="1326"/>
    </location>
</feature>
<feature type="disulfide bond" evidence="3">
    <location>
        <begin position="1297"/>
        <end position="1307"/>
    </location>
</feature>
<feature type="disulfide bond" evidence="3">
    <location>
        <begin position="1311"/>
        <end position="1339"/>
    </location>
</feature>
<feature type="disulfide bond" evidence="3">
    <location>
        <begin position="1343"/>
        <end position="1396"/>
    </location>
</feature>
<feature type="disulfide bond" evidence="3">
    <location>
        <begin position="1359"/>
        <end position="1370"/>
    </location>
</feature>
<feature type="disulfide bond" evidence="3">
    <location>
        <begin position="1374"/>
        <end position="1407"/>
    </location>
</feature>
<feature type="disulfide bond" evidence="3">
    <location>
        <begin position="1412"/>
        <end position="1455"/>
    </location>
</feature>
<feature type="disulfide bond" evidence="3">
    <location>
        <begin position="1425"/>
        <end position="1435"/>
    </location>
</feature>
<feature type="disulfide bond" evidence="3">
    <location>
        <begin position="1439"/>
        <end position="1468"/>
    </location>
</feature>
<feature type="disulfide bond" evidence="3">
    <location>
        <begin position="1475"/>
        <end position="1536"/>
    </location>
</feature>
<feature type="disulfide bond" evidence="3">
    <location>
        <begin position="1489"/>
        <end position="1499"/>
    </location>
</feature>
<feature type="disulfide bond" evidence="3">
    <location>
        <begin position="1503"/>
        <end position="1551"/>
    </location>
</feature>
<feature type="disulfide bond" evidence="3">
    <location>
        <begin position="1555"/>
        <end position="1573"/>
    </location>
</feature>
<feature type="splice variant" id="VSP_012193" description="In isoform 2." evidence="8">
    <original>R</original>
    <variation>RQSIRKRAHVVEESWLPHGKQKAKKRKRTR</variation>
    <location>
        <position position="490"/>
    </location>
</feature>
<gene>
    <name type="primary">Pappa</name>
</gene>
<name>PAPP1_MOUSE</name>
<comment type="function">
    <text evidence="7">Metalloproteinase which specifically cleaves IGFBP-4 and IGFBP-5, resulting in release of bound IGF. Cleavage of IGFBP-4 is dramatically enhanced by the presence of IGF, whereas cleavage of IGFBP-5 is slightly inhibited by the presence of IGF. Isoform 2 cleaves IGFBP-4 very slowly compared to PAPP-A, but its ability to cleave IGFBP-5 is unaffected.</text>
</comment>
<comment type="catalytic activity">
    <reaction>
        <text>Cleavage of the 135-Met-|-Lys-136 bond in insulin-like growth factor binding protein (IGFBP)-4, and the 143-Ser-|-Lys-144 bond in IGFBP-5.</text>
        <dbReference type="EC" id="3.4.24.79"/>
    </reaction>
</comment>
<comment type="cofactor">
    <cofactor evidence="1">
        <name>Zn(2+)</name>
        <dbReference type="ChEBI" id="CHEBI:29105"/>
    </cofactor>
    <text evidence="1">Binds 1 zinc ion per subunit.</text>
</comment>
<comment type="subunit">
    <text evidence="1">Homodimer; disulfide-linked. In pregnancy serum, predominantly found as a disulfide-linked 2:2 heterotetramer with the proform of PRG2 (By similarity).</text>
</comment>
<comment type="subcellular location">
    <subcellularLocation>
        <location>Secreted</location>
    </subcellularLocation>
</comment>
<comment type="alternative products">
    <event type="alternative splicing"/>
    <isoform>
        <id>Q8R4K8-1</id>
        <name>1</name>
        <sequence type="displayed"/>
    </isoform>
    <isoform>
        <id>Q8R4K8-2</id>
        <name>2</name>
        <sequence type="described" ref="VSP_012193"/>
    </isoform>
</comment>
<comment type="tissue specificity">
    <text evidence="6 7">Detected in kidney, spleen, brain, ovary, breast, skin, prostate, uterus, and placenta.</text>
</comment>
<comment type="similarity">
    <text evidence="9">Belongs to the peptidase M43B family.</text>
</comment>
<accession>Q8R4K8</accession>
<accession>Q80VW3</accession>
<accession>Q80YY1</accession>
<accession>Q8K423</accession>
<accession>Q8R4K7</accession>
<accession>Q9ES06</accession>
<accession>Q9JK57</accession>